<dbReference type="EMBL" id="L08811">
    <property type="protein sequence ID" value="AAA79329.2"/>
    <property type="molecule type" value="mRNA"/>
</dbReference>
<dbReference type="EMBL" id="AE014134">
    <property type="protein sequence ID" value="AAF51468.3"/>
    <property type="status" value="ALT_INIT"/>
    <property type="molecule type" value="Genomic_DNA"/>
</dbReference>
<dbReference type="RefSeq" id="NP_001285551.1">
    <property type="nucleotide sequence ID" value="NM_001298622.1"/>
</dbReference>
<dbReference type="RefSeq" id="NP_523446.2">
    <property type="nucleotide sequence ID" value="NM_078722.3"/>
</dbReference>
<dbReference type="SMR" id="Q24292"/>
<dbReference type="BioGRID" id="59500">
    <property type="interactions" value="35"/>
</dbReference>
<dbReference type="DIP" id="DIP-49190N"/>
<dbReference type="FunCoup" id="Q24292">
    <property type="interactions" value="132"/>
</dbReference>
<dbReference type="IntAct" id="Q24292">
    <property type="interactions" value="5"/>
</dbReference>
<dbReference type="STRING" id="7227.FBpp0077708"/>
<dbReference type="GlyCosmos" id="Q24292">
    <property type="glycosylation" value="32 sites, No reported glycans"/>
</dbReference>
<dbReference type="GlyGen" id="Q24292">
    <property type="glycosylation" value="33 sites"/>
</dbReference>
<dbReference type="iPTMnet" id="Q24292"/>
<dbReference type="PaxDb" id="7227-FBpp0077708"/>
<dbReference type="EnsemblMetazoa" id="FBtr0343249">
    <property type="protein sequence ID" value="FBpp0309926"/>
    <property type="gene ID" value="FBgn0284247"/>
</dbReference>
<dbReference type="GeneID" id="33245"/>
<dbReference type="KEGG" id="dme:Dmel_CG17941"/>
<dbReference type="UCSC" id="CG17941-RA">
    <property type="organism name" value="d. melanogaster"/>
</dbReference>
<dbReference type="AGR" id="FB:FBgn0284247"/>
<dbReference type="CTD" id="109661"/>
<dbReference type="FlyBase" id="FBgn0284247">
    <property type="gene designation" value="ds"/>
</dbReference>
<dbReference type="VEuPathDB" id="VectorBase:FBgn0284247"/>
<dbReference type="eggNOG" id="KOG3594">
    <property type="taxonomic scope" value="Eukaryota"/>
</dbReference>
<dbReference type="HOGENOM" id="CLU_000265_0_0_1"/>
<dbReference type="InParanoid" id="Q24292"/>
<dbReference type="OrthoDB" id="6252479at2759"/>
<dbReference type="PhylomeDB" id="Q24292"/>
<dbReference type="Reactome" id="R-DME-350379">
    <property type="pathway name" value="Homo-/heterophilic binding of transmembrane components"/>
</dbReference>
<dbReference type="Reactome" id="R-DME-390023">
    <property type="pathway name" value="Subcellular localisation of D"/>
</dbReference>
<dbReference type="Reactome" id="R-DME-390150">
    <property type="pathway name" value="DS ligand bound to FT receptor"/>
</dbReference>
<dbReference type="SignaLink" id="Q24292"/>
<dbReference type="GenomeRNAi" id="33245"/>
<dbReference type="PRO" id="PR:Q24292"/>
<dbReference type="Proteomes" id="UP000000803">
    <property type="component" value="Chromosome 2L"/>
</dbReference>
<dbReference type="Bgee" id="FBgn0284247">
    <property type="expression patterns" value="Expressed in wing disc and 41 other cell types or tissues"/>
</dbReference>
<dbReference type="ExpressionAtlas" id="Q24292">
    <property type="expression patterns" value="baseline and differential"/>
</dbReference>
<dbReference type="GO" id="GO:0070161">
    <property type="term" value="C:anchoring junction"/>
    <property type="evidence" value="ECO:0007669"/>
    <property type="project" value="UniProtKB-SubCell"/>
</dbReference>
<dbReference type="GO" id="GO:0016327">
    <property type="term" value="C:apicolateral plasma membrane"/>
    <property type="evidence" value="ECO:0000314"/>
    <property type="project" value="FlyBase"/>
</dbReference>
<dbReference type="GO" id="GO:0005886">
    <property type="term" value="C:plasma membrane"/>
    <property type="evidence" value="ECO:0000304"/>
    <property type="project" value="Reactome"/>
</dbReference>
<dbReference type="GO" id="GO:0005509">
    <property type="term" value="F:calcium ion binding"/>
    <property type="evidence" value="ECO:0007669"/>
    <property type="project" value="InterPro"/>
</dbReference>
<dbReference type="GO" id="GO:0042067">
    <property type="term" value="P:establishment of ommatidial planar polarity"/>
    <property type="evidence" value="ECO:0000315"/>
    <property type="project" value="UniProtKB"/>
</dbReference>
<dbReference type="GO" id="GO:0001736">
    <property type="term" value="P:establishment of planar polarity"/>
    <property type="evidence" value="ECO:0000315"/>
    <property type="project" value="FlyBase"/>
</dbReference>
<dbReference type="GO" id="GO:0007156">
    <property type="term" value="P:homophilic cell adhesion via plasma membrane adhesion molecules"/>
    <property type="evidence" value="ECO:0007669"/>
    <property type="project" value="InterPro"/>
</dbReference>
<dbReference type="GO" id="GO:0007560">
    <property type="term" value="P:imaginal disc morphogenesis"/>
    <property type="evidence" value="ECO:0000315"/>
    <property type="project" value="UniProtKB"/>
</dbReference>
<dbReference type="GO" id="GO:0035331">
    <property type="term" value="P:negative regulation of hippo signaling"/>
    <property type="evidence" value="ECO:0000316"/>
    <property type="project" value="FlyBase"/>
</dbReference>
<dbReference type="GO" id="GO:0035332">
    <property type="term" value="P:positive regulation of hippo signaling"/>
    <property type="evidence" value="ECO:0000315"/>
    <property type="project" value="FlyBase"/>
</dbReference>
<dbReference type="GO" id="GO:0090251">
    <property type="term" value="P:protein localization involved in establishment of planar polarity"/>
    <property type="evidence" value="ECO:0000315"/>
    <property type="project" value="FlyBase"/>
</dbReference>
<dbReference type="CDD" id="cd11304">
    <property type="entry name" value="Cadherin_repeat"/>
    <property type="match status" value="26"/>
</dbReference>
<dbReference type="FunFam" id="2.60.40.60:FF:000140">
    <property type="entry name" value="Dachsous cadherin-related 1"/>
    <property type="match status" value="1"/>
</dbReference>
<dbReference type="FunFam" id="2.60.40.60:FF:000020">
    <property type="entry name" value="Dachsous cadherin-related 1b"/>
    <property type="match status" value="3"/>
</dbReference>
<dbReference type="FunFam" id="2.60.40.60:FF:000102">
    <property type="entry name" value="Dachsous cadherin-related 1b"/>
    <property type="match status" value="1"/>
</dbReference>
<dbReference type="FunFam" id="2.60.40.60:FF:000116">
    <property type="entry name" value="Dachsous cadherin-related 2"/>
    <property type="match status" value="1"/>
</dbReference>
<dbReference type="FunFam" id="2.60.40.60:FF:000211">
    <property type="entry name" value="Dachsous cadherin-related 2"/>
    <property type="match status" value="1"/>
</dbReference>
<dbReference type="FunFam" id="2.60.40.60:FF:000226">
    <property type="entry name" value="Dachsous, isoform B"/>
    <property type="match status" value="1"/>
</dbReference>
<dbReference type="FunFam" id="2.60.40.60:FF:000236">
    <property type="entry name" value="Dachsous, isoform B"/>
    <property type="match status" value="2"/>
</dbReference>
<dbReference type="FunFam" id="2.60.40.60:FF:000290">
    <property type="entry name" value="Dachsous, isoform B"/>
    <property type="match status" value="1"/>
</dbReference>
<dbReference type="FunFam" id="2.60.40.60:FF:000353">
    <property type="entry name" value="Dachsous, isoform B"/>
    <property type="match status" value="1"/>
</dbReference>
<dbReference type="FunFam" id="2.60.40.60:FF:000391">
    <property type="entry name" value="Dachsous, isoform B"/>
    <property type="match status" value="1"/>
</dbReference>
<dbReference type="FunFam" id="2.60.40.60:FF:000395">
    <property type="entry name" value="Dachsous, isoform B"/>
    <property type="match status" value="1"/>
</dbReference>
<dbReference type="FunFam" id="2.60.40.60:FF:000399">
    <property type="entry name" value="Dachsous, isoform B"/>
    <property type="match status" value="1"/>
</dbReference>
<dbReference type="FunFam" id="2.60.40.60:FF:000414">
    <property type="entry name" value="Dachsous, isoform B"/>
    <property type="match status" value="1"/>
</dbReference>
<dbReference type="FunFam" id="2.60.40.60:FF:000033">
    <property type="entry name" value="FAT atypical cadherin 1"/>
    <property type="match status" value="1"/>
</dbReference>
<dbReference type="FunFam" id="2.60.40.60:FF:000004">
    <property type="entry name" value="Protocadherin 1 gamma 2"/>
    <property type="match status" value="1"/>
</dbReference>
<dbReference type="FunFam" id="2.60.40.60:FF:000035">
    <property type="entry name" value="Protocadherin Fat 3"/>
    <property type="match status" value="1"/>
</dbReference>
<dbReference type="FunFam" id="2.60.40.60:FF:000081">
    <property type="entry name" value="protocadherin Fat 4"/>
    <property type="match status" value="1"/>
</dbReference>
<dbReference type="FunFam" id="2.60.40.60:FF:000060">
    <property type="entry name" value="Putative cadherin-23"/>
    <property type="match status" value="1"/>
</dbReference>
<dbReference type="Gene3D" id="2.60.40.60">
    <property type="entry name" value="Cadherins"/>
    <property type="match status" value="27"/>
</dbReference>
<dbReference type="Gene3D" id="4.10.900.10">
    <property type="entry name" value="TCF3-CBD (Catenin binding domain)"/>
    <property type="match status" value="1"/>
</dbReference>
<dbReference type="InterPro" id="IPR002126">
    <property type="entry name" value="Cadherin-like_dom"/>
</dbReference>
<dbReference type="InterPro" id="IPR015919">
    <property type="entry name" value="Cadherin-like_sf"/>
</dbReference>
<dbReference type="InterPro" id="IPR020894">
    <property type="entry name" value="Cadherin_CS"/>
</dbReference>
<dbReference type="InterPro" id="IPR027397">
    <property type="entry name" value="Catenin-bd_sf"/>
</dbReference>
<dbReference type="InterPro" id="IPR050174">
    <property type="entry name" value="Protocadherin/Cadherin-CA"/>
</dbReference>
<dbReference type="PANTHER" id="PTHR24028:SF328">
    <property type="entry name" value="CADHERIN-3"/>
    <property type="match status" value="1"/>
</dbReference>
<dbReference type="PANTHER" id="PTHR24028">
    <property type="entry name" value="CADHERIN-87A"/>
    <property type="match status" value="1"/>
</dbReference>
<dbReference type="Pfam" id="PF00028">
    <property type="entry name" value="Cadherin"/>
    <property type="match status" value="23"/>
</dbReference>
<dbReference type="PRINTS" id="PR00205">
    <property type="entry name" value="CADHERIN"/>
</dbReference>
<dbReference type="SMART" id="SM00112">
    <property type="entry name" value="CA"/>
    <property type="match status" value="27"/>
</dbReference>
<dbReference type="SUPFAM" id="SSF49313">
    <property type="entry name" value="Cadherin-like"/>
    <property type="match status" value="27"/>
</dbReference>
<dbReference type="PROSITE" id="PS00232">
    <property type="entry name" value="CADHERIN_1"/>
    <property type="match status" value="20"/>
</dbReference>
<dbReference type="PROSITE" id="PS50268">
    <property type="entry name" value="CADHERIN_2"/>
    <property type="match status" value="27"/>
</dbReference>
<comment type="function">
    <text evidence="6 7">Required for normal morphogenesis of adult structures derived from imaginal disks (PubMed:26073018, PubMed:7601355). Plays a role in planar cell polarity and in determining body left-right asymmetry. Expression in segment H1 of the imaginal ring and interaction with Myo31DF are required to induce changes of cell shape and orientation in segment H2, which then gives rise to normal, dextral looping of the adult hindgut (PubMed:26073018).</text>
</comment>
<comment type="subunit">
    <text evidence="6">Interacts (via cytoplasmic region) with Myo31DF.</text>
</comment>
<comment type="subcellular location">
    <subcellularLocation>
        <location evidence="6">Cell membrane</location>
        <topology evidence="10">Single-pass type I membrane protein</topology>
    </subcellularLocation>
    <subcellularLocation>
        <location evidence="6">Cell junction</location>
    </subcellularLocation>
    <text evidence="6">Colocalizes with Myo32DF at cell contact sites.</text>
</comment>
<comment type="tissue specificity">
    <text evidence="7">Expressed in embryonic ectoderm. In larvae, expression is restricted to imaginal disks and brain.</text>
</comment>
<comment type="developmental stage">
    <text evidence="7">Expressed throughout embryogenesis where it is first detected during gastrulation. Also expressed in larvae and adults.</text>
</comment>
<comment type="PTM">
    <text evidence="5">Phosphorylated by fj on Ser/Thr of cadherin domains.</text>
</comment>
<comment type="disruption phenotype">
    <text evidence="6">RNAi-mediated knockdown in subdomain H1 of the imaginal ring causes loss of H2 cell orientation bias, resulting in aberrant looping of the adult hindgut.</text>
</comment>
<comment type="miscellaneous">
    <text evidence="6">Overexpression in segment H1 of the imaginal ring causes aberrant gut looping in about 40% of the cases, but no phenotype is observed when both Myo31DF and ds are overexpressed.</text>
</comment>
<comment type="sequence caution" evidence="10">
    <conflict type="erroneous initiation">
        <sequence resource="EMBL-CDS" id="AAF51468"/>
    </conflict>
</comment>
<sequence>MLRSSLLILLAIVLLGSSQAASHDQERERKLEVFEGVAVDYQIGYIGDFGGIDSGPPYIIVAEAGVETDLAIDRATGEIRTKVKLDRETRASYSLVAIPLSGRNIRVLVTVKDENDNAPTFPQTSMHIEFPENTPREVKRTLLPARDLDLEPYNTQRYNIVSGNVNDAFRLSSHRERDGVLYLDLQISGFLDRETTPGYSLLIEALDGGTPPLRGFMTVNITIQDVNDNQPIFNQSRYFATVPENATVGTSVLQVYASDTDADENGLVEYAINRRQSDKEQMFRIDPRTGAIYINKALDFETKELHELVVVAKDHGEQPLETTAFVSIRVTDVNDNQPTINVIFLSDDASPKISESAQPGEFVARISVHDPDSKTEYANVNVTLNGGDGHFALTTRDNSIYLVIVHLPLDREIVSNYTLSVVATDKGTPPLHASKSIFLRITDVNDNPPEFEQDLYHANVMEVADPGTSVLQVLAHDRDEGLNSALTYSLAETPETHAQWFQIDPQTGLITTRSHIDCETEPVPQLTVVARDGGVPPLSSTATVLVTIHDVNDNEPIFDQSFYNVSVAENEPVGRCILKVSASDPDCGVNAMVNYTIGEGFKHLTEFEVRSASGEICIAGELDFERRSSYEFPVLATDRGGLSTTAMIKMQLTDVNDNRPVFYPREYKVSLRESPKASSQASSTPIVAVVATDPDYGNFGQVSYRIVAGNEAGIFRIDRSTGEIFVVRPDMLSVRTQPMHMLNISATDGGNLRSNADAVVFLSIIDAMQRPPIFEKARYNYYVKEDIPRGTVVGSVIAASGDVAHRSPVRYSIYSGDPDGYFSIETNSGNIRIAKPLDHEAKSQVLLNIQATLGEPPVYGHTQVNIEVEDVNDNAPEFEASMVRISVPESAELGAPLYAAHAHDKDSGSSGQVTYSLVKESGKGLFAIDARSGHLILSQHLDYESSQRHTLIVTATDGGVPSLSTNLTILVDVQDVNDNPPVFEKDEYSVNVSESRSINAQIIQVNASDLDTGNNARITYRIVDAGVDNVTNSISSSDVSQHFGIFPNSGWIYLRAPLDRETRDRYQLTVLATDNGTPAAHAKTRVIVRVLDANDNDPKFQKSKYEFRIEENLRRGSVVGVVTASDLDLGENAAIRYSLLPINSSFQVHPVTGEISTREPLDRELRELYDLVVEARDQGTPVRSARVPVRIHVSDVNDNAPEIADPQEDVVSVREEQPPGTEVVRVRAVDRDHGQNASITYSIVKGRDSDGHGLFSIDPTSGVIRTRVVLDHEERSIYRLGVAASDGGNPPRETVRMLRVEVLDLNDNRPTFTSSSLVFRVREDAALGHVVGSISPIERPADVVRNSVEESFEDLRVTYTLNPLTKDLIEAAFDIDRHSGNLVVARLLDREVQSEFRLEIRALDTTASNNPQSSAITVKIEVADVNDNAPEWPQDPIDLQVSEATPVGTIIHNFTATDADTGTNGDLQYRLIRYFPQLNESQEQAMSLFRMDSLTGALSLQAPLDFEAVQEYLLIVQALDQSSNVTERLQTSVTVRLRILDANDHAPHFVSPNSSGGKTASLFISDATRIGEVVAHIVAVDEDSGDNGQLTYEITGGNGEGRFRINSQTGIIELVKSLPPATEDVEKGGRFNLIIGAKDHGQPEPKKSSLNLHLIVQGSHNNPPRFLQAVYRATILENVPSGSFVLQVTAKSLHGAENANLSYEIPAGVANDLFHVDWQRGIITTRGQFDRESQASYVLPVYVRDANRQSTLSSSAVRKQRSSDSIGDTSNGQHFDVATIYITVGDVNDNSPEFRPGSCYGLSVPENSEPGVIHTVVASDLDEGPNADLIYSITGGNLGNKFSIDSSSGELSARPLDREQHSRYTLQIQASDRGQPKSRQGHCNITIFVEDQNDNAPRFKLSKYTGSVQEDAPLGTSVVQISAVDADLGVNARLVYSLANETQWQFAIDGQSGLITTVGKLDRELQASYNFMVLATDGGRYEVRSATVPVQINVLDINDNRPIFERYPYIGQVPALIQPGQTLLKVQALDADLGANAEIVYSLNAENSAVSAKFRINPSTGALSASQSLASESGKLLHLEVVARDKGNPPQSSLGLIELLIGEAPQGTPVLRFQNETYRVMLKENSPSGTRLLQVVALRSDGRRQKVQFSFGAGNEDGILSLDSLSGEIRVNKPHLLDYDRFSTPSMSALSRGRALHYEEEIDESSEEDPNNSTRSQRALTSSSFALTNSQPNEIRVVLVARTADAPFLASYAELVIELEDENDNSPKFSQKQFVATVSEGNNKGTFVAQVHAFDSDAGSNARLRYHIVDGNHDNAFVIEPAFSGIVRTNIVLDREIRDIYKLKIIATDEGVPQMTGTATIRVQIVDVNDNQPTFPPNNLVTVSEATELGAVITSISANDVDTYPALTYRLGAESTVDIENMSIFALDRYSGKLVLKRRLDYELQQEYELDVIASDAAHEARTVLTVRVNDENDNAPVFLAQQPPAYFAILPAISEISESLSVDFDLLTVNATDADSEGNNSKVIYIIEPAQEGFSVHPSNGVVSVNMSRLQPAVSSSGDYFVRIIAKDAGKPALKSSTLLRVQANDNGSGRSQFLQNQYRAQISEAAPLGSVVLQLGQDALDQSLAIIAGNEESAFELLQSKAIVLVKPLDRERNDLYKLRLVLSHPHGPPLISSLNSSSGISVIITILDANDNFPIFDRSAKYEAEISELAPLRYSIAQLQAIDADQENTPNSEVVYDITSGNDEHMFTIDLVTGVLFVNNRLDYDSGAKSYELIIRACDSHHQRPLCSLQPFRLELHDENDNEPKFPLTEYVHFLAENEPVGSSVFRAHASDLDKGPFGQLNYSIGPAPSDESSWKMFRVDSESGLVTSAFVFDYEQRQRYDMELLASDMGGKKASVAVRVEIESRDEFTPQFTERTYRFVLPAAVALPQGYVVGQVTATDSDSGPDGRVVYQLSAPHSHFKVNRSSGAVLIKRKLKLDGDGDGNLYMDGRDISLVISASSGRHNSLSSMAVVEIALDPLAHPGTNLASAGGSSSGSIGDWAIGLLVAFLLVLCAAAGIFLFIHMRSRKPRNAVKPHLATDNAGVGNTNSYVDPSAFDTIPIRGSISGGAAGAASGQFAPPKYDEIPPFGAHAGSSGAATTSELSGSEQSGSSGRGSAEDDGEDEEIRMINEGPLHHRNGGAGAGSDDGRISDISVQNTQEYLARLGIVDHDPSGAGGGASSMAGSSHPMHLYHDDDATARSDITNLIYAKLNDVTGAGSEIGSSADDAGTTAGSIGTIGTAITHGHGVMSSYGEVPVPVPVVVGGSNVGGSLSSIVHSEEELTGSYNWDYLLDWGPQYQPLAHVFSEIARLKDDTLSEHSGSGASSSAKSKHSSSHSSAGAGSVVLKPPPSAPPTHIPPPLLTNVAPRAINLPMRLPPHLSLAPAHLPRSPIGHEASGSFSTSSAMSPSFSPSLSPLATRSPSISPLGAGPPTHLPHVSLPRHGHAPQPSQRGNVGTRM</sequence>
<feature type="signal peptide" evidence="1">
    <location>
        <begin position="1"/>
        <end position="20"/>
    </location>
</feature>
<feature type="chain" id="PRO_0000004009" description="Protein dachsous">
    <location>
        <begin position="21"/>
        <end position="3503"/>
    </location>
</feature>
<feature type="topological domain" description="Extracellular" evidence="1">
    <location>
        <begin position="21"/>
        <end position="3045"/>
    </location>
</feature>
<feature type="transmembrane region" description="Helical" evidence="1">
    <location>
        <begin position="3046"/>
        <end position="3066"/>
    </location>
</feature>
<feature type="topological domain" description="Cytoplasmic" evidence="1">
    <location>
        <begin position="3067"/>
        <end position="3503"/>
    </location>
</feature>
<feature type="domain" description="Cadherin 1" evidence="2">
    <location>
        <begin position="22"/>
        <end position="121"/>
    </location>
</feature>
<feature type="domain" description="Cadherin 2" evidence="2">
    <location>
        <begin position="122"/>
        <end position="233"/>
    </location>
</feature>
<feature type="domain" description="Cadherin 3" evidence="2">
    <location>
        <begin position="234"/>
        <end position="340"/>
    </location>
</feature>
<feature type="domain" description="Cadherin 4" evidence="2">
    <location>
        <begin position="345"/>
        <end position="451"/>
    </location>
</feature>
<feature type="domain" description="Cadherin 5" evidence="2">
    <location>
        <begin position="452"/>
        <end position="558"/>
    </location>
</feature>
<feature type="domain" description="Cadherin 6" evidence="2">
    <location>
        <begin position="559"/>
        <end position="662"/>
    </location>
</feature>
<feature type="domain" description="Cadherin 7" evidence="2">
    <location>
        <begin position="663"/>
        <end position="774"/>
    </location>
</feature>
<feature type="domain" description="Cadherin 8" evidence="2">
    <location>
        <begin position="775"/>
        <end position="878"/>
    </location>
</feature>
<feature type="domain" description="Cadherin 9" evidence="2">
    <location>
        <begin position="879"/>
        <end position="983"/>
    </location>
</feature>
<feature type="domain" description="Cadherin 10" evidence="2">
    <location>
        <begin position="984"/>
        <end position="1100"/>
    </location>
</feature>
<feature type="domain" description="Cadherin 11" evidence="2">
    <location>
        <begin position="1101"/>
        <end position="1203"/>
    </location>
</feature>
<feature type="domain" description="Cadherin 12" evidence="2">
    <location>
        <begin position="1205"/>
        <end position="1312"/>
    </location>
</feature>
<feature type="domain" description="Cadherin 13" evidence="2">
    <location>
        <begin position="1313"/>
        <end position="1432"/>
    </location>
</feature>
<feature type="domain" description="Cadherin 14" evidence="2">
    <location>
        <begin position="1433"/>
        <end position="1549"/>
    </location>
</feature>
<feature type="domain" description="Cadherin 15" evidence="2">
    <location>
        <begin position="1556"/>
        <end position="1666"/>
    </location>
</feature>
<feature type="domain" description="Cadherin 16" evidence="2">
    <location>
        <begin position="1667"/>
        <end position="1794"/>
    </location>
</feature>
<feature type="domain" description="Cadherin 17" evidence="2">
    <location>
        <begin position="1796"/>
        <end position="1899"/>
    </location>
</feature>
<feature type="domain" description="Cadherin 18" evidence="2">
    <location>
        <begin position="1900"/>
        <end position="2004"/>
    </location>
</feature>
<feature type="domain" description="Cadherin 19" evidence="2">
    <location>
        <begin position="2005"/>
        <end position="2111"/>
    </location>
</feature>
<feature type="domain" description="Cadherin 20" evidence="2">
    <location>
        <begin position="2114"/>
        <end position="2269"/>
    </location>
</feature>
<feature type="domain" description="Cadherin 21" evidence="2">
    <location>
        <begin position="2270"/>
        <end position="2375"/>
    </location>
</feature>
<feature type="domain" description="Cadherin 22" evidence="2">
    <location>
        <begin position="2375"/>
        <end position="2479"/>
    </location>
</feature>
<feature type="domain" description="Cadherin 23" evidence="2">
    <location>
        <begin position="2489"/>
        <end position="2595"/>
    </location>
</feature>
<feature type="domain" description="Cadherin 24" evidence="2">
    <location>
        <begin position="2596"/>
        <end position="2699"/>
    </location>
</feature>
<feature type="domain" description="Cadherin 25" evidence="2">
    <location>
        <begin position="2701"/>
        <end position="2809"/>
    </location>
</feature>
<feature type="domain" description="Cadherin 26" evidence="2">
    <location>
        <begin position="2810"/>
        <end position="2916"/>
    </location>
</feature>
<feature type="domain" description="Cadherin 27" evidence="2">
    <location>
        <begin position="2919"/>
        <end position="3028"/>
    </location>
</feature>
<feature type="region of interest" description="Disordered" evidence="3">
    <location>
        <begin position="2193"/>
        <end position="2225"/>
    </location>
</feature>
<feature type="region of interest" description="Disordered" evidence="3">
    <location>
        <begin position="3114"/>
        <end position="3195"/>
    </location>
</feature>
<feature type="region of interest" description="Disordered" evidence="3">
    <location>
        <begin position="3360"/>
        <end position="3404"/>
    </location>
</feature>
<feature type="region of interest" description="Disordered" evidence="3">
    <location>
        <begin position="3431"/>
        <end position="3503"/>
    </location>
</feature>
<feature type="compositionally biased region" description="Acidic residues" evidence="3">
    <location>
        <begin position="2200"/>
        <end position="2210"/>
    </location>
</feature>
<feature type="compositionally biased region" description="Polar residues" evidence="3">
    <location>
        <begin position="2211"/>
        <end position="2225"/>
    </location>
</feature>
<feature type="compositionally biased region" description="Low complexity" evidence="3">
    <location>
        <begin position="3133"/>
        <end position="3159"/>
    </location>
</feature>
<feature type="compositionally biased region" description="Low complexity" evidence="3">
    <location>
        <begin position="3363"/>
        <end position="3372"/>
    </location>
</feature>
<feature type="compositionally biased region" description="Pro residues" evidence="3">
    <location>
        <begin position="3391"/>
        <end position="3404"/>
    </location>
</feature>
<feature type="compositionally biased region" description="Low complexity" evidence="3">
    <location>
        <begin position="3440"/>
        <end position="3463"/>
    </location>
</feature>
<feature type="compositionally biased region" description="Polar residues" evidence="3">
    <location>
        <begin position="3492"/>
        <end position="3503"/>
    </location>
</feature>
<feature type="modified residue" description="Phosphoserine" evidence="5">
    <location>
        <position position="236"/>
    </location>
</feature>
<feature type="modified residue" description="Phosphoserine" evidence="4">
    <location>
        <position position="3465"/>
    </location>
</feature>
<feature type="modified residue" description="Phosphoserine" evidence="4">
    <location>
        <position position="3469"/>
    </location>
</feature>
<feature type="glycosylation site" description="N-linked (GlcNAc...) asparagine" evidence="1">
    <location>
        <position position="220"/>
    </location>
</feature>
<feature type="glycosylation site" description="N-linked (GlcNAc...) asparagine" evidence="1">
    <location>
        <position position="234"/>
    </location>
</feature>
<feature type="glycosylation site" description="N-linked (GlcNAc...) asparagine" evidence="1">
    <location>
        <position position="245"/>
    </location>
</feature>
<feature type="glycosylation site" description="N-linked (GlcNAc...) asparagine" evidence="1">
    <location>
        <position position="381"/>
    </location>
</feature>
<feature type="glycosylation site" description="N-linked (GlcNAc...) asparagine" evidence="1">
    <location>
        <position position="416"/>
    </location>
</feature>
<feature type="glycosylation site" description="N-linked (GlcNAc...) asparagine" evidence="1">
    <location>
        <position position="564"/>
    </location>
</feature>
<feature type="glycosylation site" description="N-linked (GlcNAc...) asparagine" evidence="1">
    <location>
        <position position="594"/>
    </location>
</feature>
<feature type="glycosylation site" description="N-linked (GlcNAc...) asparagine" evidence="1">
    <location>
        <position position="743"/>
    </location>
</feature>
<feature type="glycosylation site" description="N-linked (GlcNAc...) asparagine" evidence="1">
    <location>
        <position position="966"/>
    </location>
</feature>
<feature type="glycosylation site" description="N-linked (GlcNAc...) asparagine" evidence="1">
    <location>
        <position position="991"/>
    </location>
</feature>
<feature type="glycosylation site" description="N-linked (GlcNAc...) asparagine" evidence="1">
    <location>
        <position position="1006"/>
    </location>
</feature>
<feature type="glycosylation site" description="N-linked (GlcNAc...) asparagine" evidence="1">
    <location>
        <position position="1029"/>
    </location>
</feature>
<feature type="glycosylation site" description="N-linked (GlcNAc...) asparagine" evidence="1">
    <location>
        <position position="1143"/>
    </location>
</feature>
<feature type="glycosylation site" description="N-linked (GlcNAc...) asparagine" evidence="1">
    <location>
        <position position="1236"/>
    </location>
</feature>
<feature type="glycosylation site" description="N-linked (GlcNAc...) asparagine" evidence="1">
    <location>
        <position position="1453"/>
    </location>
</feature>
<feature type="glycosylation site" description="N-linked (GlcNAc...) asparagine" evidence="1">
    <location>
        <position position="1479"/>
    </location>
</feature>
<feature type="glycosylation site" description="N-linked (GlcNAc...) asparagine" evidence="1">
    <location>
        <position position="1524"/>
    </location>
</feature>
<feature type="glycosylation site" description="N-linked (GlcNAc...) asparagine" evidence="1">
    <location>
        <position position="1553"/>
    </location>
</feature>
<feature type="glycosylation site" description="N-linked (GlcNAc...) asparagine" evidence="1">
    <location>
        <position position="1700"/>
    </location>
</feature>
<feature type="glycosylation site" description="N-linked (GlcNAc...) asparagine" evidence="1">
    <location>
        <position position="1884"/>
    </location>
</feature>
<feature type="glycosylation site" description="N-linked (GlcNAc...) asparagine" evidence="1">
    <location>
        <position position="1940"/>
    </location>
</feature>
<feature type="glycosylation site" description="N-linked (GlcNAc...) asparagine" evidence="1">
    <location>
        <position position="2115"/>
    </location>
</feature>
<feature type="glycosylation site" description="N-linked (GlcNAc...) asparagine" evidence="1">
    <location>
        <position position="2211"/>
    </location>
</feature>
<feature type="glycosylation site" description="N-linked (GlcNAc...) asparagine" evidence="1">
    <location>
        <position position="2212"/>
    </location>
</feature>
<feature type="glycosylation site" description="N-linked (GlcNAc...) asparagine" evidence="1">
    <location>
        <position position="2421"/>
    </location>
</feature>
<feature type="glycosylation site" description="N-linked (GlcNAc...) asparagine" evidence="1">
    <location>
        <position position="2511"/>
    </location>
</feature>
<feature type="glycosylation site" description="N-linked (GlcNAc...) asparagine" evidence="1">
    <location>
        <position position="2520"/>
    </location>
</feature>
<feature type="glycosylation site" description="N-linked (GlcNAc...) asparagine" evidence="1">
    <location>
        <position position="2547"/>
    </location>
</feature>
<feature type="glycosylation site" description="N-linked (GlcNAc...) asparagine" evidence="1">
    <location>
        <position position="2588"/>
    </location>
</feature>
<feature type="glycosylation site" description="N-linked (GlcNAc...) asparagine" evidence="1">
    <location>
        <position position="2678"/>
    </location>
</feature>
<feature type="glycosylation site" description="N-linked (GlcNAc...) asparagine" evidence="1">
    <location>
        <position position="2845"/>
    </location>
</feature>
<feature type="glycosylation site" description="N-linked (GlcNAc...) asparagine" evidence="1">
    <location>
        <position position="2967"/>
    </location>
</feature>
<feature type="mutagenesis site" description="Decreased phosphorylation by fj." evidence="5">
    <original>S</original>
    <variation>A</variation>
    <location>
        <position position="236"/>
    </location>
</feature>
<feature type="sequence conflict" description="In Ref. 1; AAA79329." evidence="10" ref="1">
    <original>V</original>
    <variation>I</variation>
    <location>
        <position position="1070"/>
    </location>
</feature>
<feature type="sequence conflict" description="In Ref. 1; AAA79329." evidence="10" ref="1">
    <original>R</original>
    <variation>S</variation>
    <location>
        <position position="1490"/>
    </location>
</feature>
<feature type="sequence conflict" description="In Ref. 1; AAA79329." evidence="10" ref="1">
    <original>G</original>
    <variation>S</variation>
    <location>
        <position position="1636"/>
    </location>
</feature>
<feature type="sequence conflict" description="In Ref. 1; AAA79329." evidence="10" ref="1">
    <original>S</original>
    <variation>P</variation>
    <location>
        <position position="1692"/>
    </location>
</feature>
<feature type="sequence conflict" description="In Ref. 1; AAA79329." evidence="10" ref="1">
    <original>V</original>
    <variation>I</variation>
    <location>
        <position position="1804"/>
    </location>
</feature>
<feature type="sequence conflict" description="In Ref. 1; AAA79329." evidence="10" ref="1">
    <original>L</original>
    <variation>I</variation>
    <location>
        <position position="2029"/>
    </location>
</feature>
<feature type="sequence conflict" description="In Ref. 1; AAA79329." evidence="10" ref="1">
    <original>P</original>
    <variation>A</variation>
    <location>
        <position position="2210"/>
    </location>
</feature>
<feature type="sequence conflict" description="In Ref. 1; AAA79329." evidence="10" ref="1">
    <original>A</original>
    <variation>S</variation>
    <location>
        <position position="2289"/>
    </location>
</feature>
<feature type="sequence conflict" description="In Ref. 1; AAA79329." evidence="10" ref="1">
    <original>S</original>
    <variation>T</variation>
    <location>
        <position position="2536"/>
    </location>
</feature>
<feature type="sequence conflict" description="In Ref. 1; AAA79329." evidence="10" ref="1">
    <original>R</original>
    <variation>Q</variation>
    <location>
        <position position="2862"/>
    </location>
</feature>
<feature type="sequence conflict" description="In Ref. 1; AAA79329." evidence="10" ref="1">
    <original>S</original>
    <variation>G</variation>
    <location>
        <position position="3038"/>
    </location>
</feature>
<reference evidence="10" key="1">
    <citation type="journal article" date="1995" name="Genes Dev.">
        <title>Dachsous encodes a member of the cadherin superfamily that controls imaginal disc morphogenesis in Drosophila.</title>
        <authorList>
            <person name="Clark H.F."/>
            <person name="Brentrup D."/>
            <person name="Schneitz K."/>
            <person name="Bieber A."/>
            <person name="Goodman C."/>
            <person name="Noll M."/>
        </authorList>
    </citation>
    <scope>NUCLEOTIDE SEQUENCE [MRNA]</scope>
    <scope>FUNCTION</scope>
    <scope>TISSUE SPECIFICITY</scope>
    <scope>DEVELOPMENTAL STAGE</scope>
    <source>
        <tissue>Embryo</tissue>
    </source>
</reference>
<reference evidence="10" key="2">
    <citation type="submission" date="1999-05" db="EMBL/GenBank/DDBJ databases">
        <authorList>
            <person name="Noll M."/>
        </authorList>
    </citation>
    <scope>SEQUENCE REVISION</scope>
</reference>
<reference key="3">
    <citation type="journal article" date="2000" name="Science">
        <title>The genome sequence of Drosophila melanogaster.</title>
        <authorList>
            <person name="Adams M.D."/>
            <person name="Celniker S.E."/>
            <person name="Holt R.A."/>
            <person name="Evans C.A."/>
            <person name="Gocayne J.D."/>
            <person name="Amanatides P.G."/>
            <person name="Scherer S.E."/>
            <person name="Li P.W."/>
            <person name="Hoskins R.A."/>
            <person name="Galle R.F."/>
            <person name="George R.A."/>
            <person name="Lewis S.E."/>
            <person name="Richards S."/>
            <person name="Ashburner M."/>
            <person name="Henderson S.N."/>
            <person name="Sutton G.G."/>
            <person name="Wortman J.R."/>
            <person name="Yandell M.D."/>
            <person name="Zhang Q."/>
            <person name="Chen L.X."/>
            <person name="Brandon R.C."/>
            <person name="Rogers Y.-H.C."/>
            <person name="Blazej R.G."/>
            <person name="Champe M."/>
            <person name="Pfeiffer B.D."/>
            <person name="Wan K.H."/>
            <person name="Doyle C."/>
            <person name="Baxter E.G."/>
            <person name="Helt G."/>
            <person name="Nelson C.R."/>
            <person name="Miklos G.L.G."/>
            <person name="Abril J.F."/>
            <person name="Agbayani A."/>
            <person name="An H.-J."/>
            <person name="Andrews-Pfannkoch C."/>
            <person name="Baldwin D."/>
            <person name="Ballew R.M."/>
            <person name="Basu A."/>
            <person name="Baxendale J."/>
            <person name="Bayraktaroglu L."/>
            <person name="Beasley E.M."/>
            <person name="Beeson K.Y."/>
            <person name="Benos P.V."/>
            <person name="Berman B.P."/>
            <person name="Bhandari D."/>
            <person name="Bolshakov S."/>
            <person name="Borkova D."/>
            <person name="Botchan M.R."/>
            <person name="Bouck J."/>
            <person name="Brokstein P."/>
            <person name="Brottier P."/>
            <person name="Burtis K.C."/>
            <person name="Busam D.A."/>
            <person name="Butler H."/>
            <person name="Cadieu E."/>
            <person name="Center A."/>
            <person name="Chandra I."/>
            <person name="Cherry J.M."/>
            <person name="Cawley S."/>
            <person name="Dahlke C."/>
            <person name="Davenport L.B."/>
            <person name="Davies P."/>
            <person name="de Pablos B."/>
            <person name="Delcher A."/>
            <person name="Deng Z."/>
            <person name="Mays A.D."/>
            <person name="Dew I."/>
            <person name="Dietz S.M."/>
            <person name="Dodson K."/>
            <person name="Doup L.E."/>
            <person name="Downes M."/>
            <person name="Dugan-Rocha S."/>
            <person name="Dunkov B.C."/>
            <person name="Dunn P."/>
            <person name="Durbin K.J."/>
            <person name="Evangelista C.C."/>
            <person name="Ferraz C."/>
            <person name="Ferriera S."/>
            <person name="Fleischmann W."/>
            <person name="Fosler C."/>
            <person name="Gabrielian A.E."/>
            <person name="Garg N.S."/>
            <person name="Gelbart W.M."/>
            <person name="Glasser K."/>
            <person name="Glodek A."/>
            <person name="Gong F."/>
            <person name="Gorrell J.H."/>
            <person name="Gu Z."/>
            <person name="Guan P."/>
            <person name="Harris M."/>
            <person name="Harris N.L."/>
            <person name="Harvey D.A."/>
            <person name="Heiman T.J."/>
            <person name="Hernandez J.R."/>
            <person name="Houck J."/>
            <person name="Hostin D."/>
            <person name="Houston K.A."/>
            <person name="Howland T.J."/>
            <person name="Wei M.-H."/>
            <person name="Ibegwam C."/>
            <person name="Jalali M."/>
            <person name="Kalush F."/>
            <person name="Karpen G.H."/>
            <person name="Ke Z."/>
            <person name="Kennison J.A."/>
            <person name="Ketchum K.A."/>
            <person name="Kimmel B.E."/>
            <person name="Kodira C.D."/>
            <person name="Kraft C.L."/>
            <person name="Kravitz S."/>
            <person name="Kulp D."/>
            <person name="Lai Z."/>
            <person name="Lasko P."/>
            <person name="Lei Y."/>
            <person name="Levitsky A.A."/>
            <person name="Li J.H."/>
            <person name="Li Z."/>
            <person name="Liang Y."/>
            <person name="Lin X."/>
            <person name="Liu X."/>
            <person name="Mattei B."/>
            <person name="McIntosh T.C."/>
            <person name="McLeod M.P."/>
            <person name="McPherson D."/>
            <person name="Merkulov G."/>
            <person name="Milshina N.V."/>
            <person name="Mobarry C."/>
            <person name="Morris J."/>
            <person name="Moshrefi A."/>
            <person name="Mount S.M."/>
            <person name="Moy M."/>
            <person name="Murphy B."/>
            <person name="Murphy L."/>
            <person name="Muzny D.M."/>
            <person name="Nelson D.L."/>
            <person name="Nelson D.R."/>
            <person name="Nelson K.A."/>
            <person name="Nixon K."/>
            <person name="Nusskern D.R."/>
            <person name="Pacleb J.M."/>
            <person name="Palazzolo M."/>
            <person name="Pittman G.S."/>
            <person name="Pan S."/>
            <person name="Pollard J."/>
            <person name="Puri V."/>
            <person name="Reese M.G."/>
            <person name="Reinert K."/>
            <person name="Remington K."/>
            <person name="Saunders R.D.C."/>
            <person name="Scheeler F."/>
            <person name="Shen H."/>
            <person name="Shue B.C."/>
            <person name="Siden-Kiamos I."/>
            <person name="Simpson M."/>
            <person name="Skupski M.P."/>
            <person name="Smith T.J."/>
            <person name="Spier E."/>
            <person name="Spradling A.C."/>
            <person name="Stapleton M."/>
            <person name="Strong R."/>
            <person name="Sun E."/>
            <person name="Svirskas R."/>
            <person name="Tector C."/>
            <person name="Turner R."/>
            <person name="Venter E."/>
            <person name="Wang A.H."/>
            <person name="Wang X."/>
            <person name="Wang Z.-Y."/>
            <person name="Wassarman D.A."/>
            <person name="Weinstock G.M."/>
            <person name="Weissenbach J."/>
            <person name="Williams S.M."/>
            <person name="Woodage T."/>
            <person name="Worley K.C."/>
            <person name="Wu D."/>
            <person name="Yang S."/>
            <person name="Yao Q.A."/>
            <person name="Ye J."/>
            <person name="Yeh R.-F."/>
            <person name="Zaveri J.S."/>
            <person name="Zhan M."/>
            <person name="Zhang G."/>
            <person name="Zhao Q."/>
            <person name="Zheng L."/>
            <person name="Zheng X.H."/>
            <person name="Zhong F.N."/>
            <person name="Zhong W."/>
            <person name="Zhou X."/>
            <person name="Zhu S.C."/>
            <person name="Zhu X."/>
            <person name="Smith H.O."/>
            <person name="Gibbs R.A."/>
            <person name="Myers E.W."/>
            <person name="Rubin G.M."/>
            <person name="Venter J.C."/>
        </authorList>
    </citation>
    <scope>NUCLEOTIDE SEQUENCE [LARGE SCALE GENOMIC DNA]</scope>
    <source>
        <strain>Berkeley</strain>
    </source>
</reference>
<reference key="4">
    <citation type="journal article" date="2002" name="Genome Biol.">
        <title>Annotation of the Drosophila melanogaster euchromatic genome: a systematic review.</title>
        <authorList>
            <person name="Misra S."/>
            <person name="Crosby M.A."/>
            <person name="Mungall C.J."/>
            <person name="Matthews B.B."/>
            <person name="Campbell K.S."/>
            <person name="Hradecky P."/>
            <person name="Huang Y."/>
            <person name="Kaminker J.S."/>
            <person name="Millburn G.H."/>
            <person name="Prochnik S.E."/>
            <person name="Smith C.D."/>
            <person name="Tupy J.L."/>
            <person name="Whitfield E.J."/>
            <person name="Bayraktaroglu L."/>
            <person name="Berman B.P."/>
            <person name="Bettencourt B.R."/>
            <person name="Celniker S.E."/>
            <person name="de Grey A.D.N.J."/>
            <person name="Drysdale R.A."/>
            <person name="Harris N.L."/>
            <person name="Richter J."/>
            <person name="Russo S."/>
            <person name="Schroeder A.J."/>
            <person name="Shu S.Q."/>
            <person name="Stapleton M."/>
            <person name="Yamada C."/>
            <person name="Ashburner M."/>
            <person name="Gelbart W.M."/>
            <person name="Rubin G.M."/>
            <person name="Lewis S.E."/>
        </authorList>
    </citation>
    <scope>GENOME REANNOTATION</scope>
    <source>
        <strain>Berkeley</strain>
    </source>
</reference>
<reference key="5">
    <citation type="journal article" date="2008" name="J. Proteome Res.">
        <title>Phosphoproteome analysis of Drosophila melanogaster embryos.</title>
        <authorList>
            <person name="Zhai B."/>
            <person name="Villen J."/>
            <person name="Beausoleil S.A."/>
            <person name="Mintseris J."/>
            <person name="Gygi S.P."/>
        </authorList>
    </citation>
    <scope>PHOSPHORYLATION [LARGE SCALE ANALYSIS] AT SER-3465 AND SER-3469</scope>
    <scope>IDENTIFICATION BY MASS SPECTROMETRY</scope>
    <source>
        <tissue>Embryo</tissue>
    </source>
</reference>
<reference key="6">
    <citation type="journal article" date="2008" name="Science">
        <title>Four-jointed is a Golgi kinase that phosphorylates a subset of cadherin domains.</title>
        <authorList>
            <person name="Ishikawa H.O."/>
            <person name="Takeuchi H."/>
            <person name="Haltiwanger R.S."/>
            <person name="Irvine K.D."/>
        </authorList>
    </citation>
    <scope>PHOSPHORYLATION AT SER-236</scope>
    <scope>MUTAGENESIS OF SER-236</scope>
</reference>
<reference key="7">
    <citation type="journal article" date="2015" name="Dev. Cell">
        <title>The Atypical Cadherin Dachsous Controls Left-Right Asymmetry in Drosophila.</title>
        <authorList>
            <person name="Gonzalez-Morales N."/>
            <person name="Geminard C."/>
            <person name="Lebreton G."/>
            <person name="Cerezo D."/>
            <person name="Coutelis J.B."/>
            <person name="Noselli S."/>
        </authorList>
    </citation>
    <scope>FUNCTION</scope>
    <scope>DISRUPTION PHENOTYPE</scope>
    <scope>INTERACTION WITH MYO31DF</scope>
</reference>
<protein>
    <recommendedName>
        <fullName evidence="8 9">Protein dachsous</fullName>
    </recommendedName>
    <alternativeName>
        <fullName>Adherin</fullName>
    </alternativeName>
</protein>
<accession>Q24292</accession>
<accession>Q9VPS4</accession>
<keyword id="KW-0106">Calcium</keyword>
<keyword id="KW-0130">Cell adhesion</keyword>
<keyword id="KW-0965">Cell junction</keyword>
<keyword id="KW-1003">Cell membrane</keyword>
<keyword id="KW-0217">Developmental protein</keyword>
<keyword id="KW-0325">Glycoprotein</keyword>
<keyword id="KW-0472">Membrane</keyword>
<keyword id="KW-0597">Phosphoprotein</keyword>
<keyword id="KW-1185">Reference proteome</keyword>
<keyword id="KW-0677">Repeat</keyword>
<keyword id="KW-0732">Signal</keyword>
<keyword id="KW-0812">Transmembrane</keyword>
<keyword id="KW-1133">Transmembrane helix</keyword>
<evidence type="ECO:0000255" key="1"/>
<evidence type="ECO:0000255" key="2">
    <source>
        <dbReference type="PROSITE-ProRule" id="PRU00043"/>
    </source>
</evidence>
<evidence type="ECO:0000256" key="3">
    <source>
        <dbReference type="SAM" id="MobiDB-lite"/>
    </source>
</evidence>
<evidence type="ECO:0000269" key="4">
    <source>
    </source>
</evidence>
<evidence type="ECO:0000269" key="5">
    <source>
    </source>
</evidence>
<evidence type="ECO:0000269" key="6">
    <source>
    </source>
</evidence>
<evidence type="ECO:0000269" key="7">
    <source>
    </source>
</evidence>
<evidence type="ECO:0000303" key="8">
    <source>
    </source>
</evidence>
<evidence type="ECO:0000303" key="9">
    <source>
    </source>
</evidence>
<evidence type="ECO:0000305" key="10"/>
<evidence type="ECO:0000312" key="11">
    <source>
        <dbReference type="EMBL" id="AAF51468.3"/>
    </source>
</evidence>
<organism evidence="11">
    <name type="scientific">Drosophila melanogaster</name>
    <name type="common">Fruit fly</name>
    <dbReference type="NCBI Taxonomy" id="7227"/>
    <lineage>
        <taxon>Eukaryota</taxon>
        <taxon>Metazoa</taxon>
        <taxon>Ecdysozoa</taxon>
        <taxon>Arthropoda</taxon>
        <taxon>Hexapoda</taxon>
        <taxon>Insecta</taxon>
        <taxon>Pterygota</taxon>
        <taxon>Neoptera</taxon>
        <taxon>Endopterygota</taxon>
        <taxon>Diptera</taxon>
        <taxon>Brachycera</taxon>
        <taxon>Muscomorpha</taxon>
        <taxon>Ephydroidea</taxon>
        <taxon>Drosophilidae</taxon>
        <taxon>Drosophila</taxon>
        <taxon>Sophophora</taxon>
    </lineage>
</organism>
<gene>
    <name type="primary">ds</name>
    <name type="ORF">CG17941</name>
</gene>
<proteinExistence type="evidence at protein level"/>
<name>DS_DROME</name>